<organism>
    <name type="scientific">Mus musculus</name>
    <name type="common">Mouse</name>
    <dbReference type="NCBI Taxonomy" id="10090"/>
    <lineage>
        <taxon>Eukaryota</taxon>
        <taxon>Metazoa</taxon>
        <taxon>Chordata</taxon>
        <taxon>Craniata</taxon>
        <taxon>Vertebrata</taxon>
        <taxon>Euteleostomi</taxon>
        <taxon>Mammalia</taxon>
        <taxon>Eutheria</taxon>
        <taxon>Euarchontoglires</taxon>
        <taxon>Glires</taxon>
        <taxon>Rodentia</taxon>
        <taxon>Myomorpha</taxon>
        <taxon>Muroidea</taxon>
        <taxon>Muridae</taxon>
        <taxon>Murinae</taxon>
        <taxon>Mus</taxon>
        <taxon>Mus</taxon>
    </lineage>
</organism>
<proteinExistence type="evidence at transcript level"/>
<comment type="alternative products">
    <event type="alternative splicing"/>
    <isoform>
        <id>Q497Q6-1</id>
        <name>1</name>
        <sequence type="displayed"/>
    </isoform>
    <isoform>
        <id>Q497Q6-2</id>
        <name>2</name>
        <sequence type="described" ref="VSP_035165 VSP_035166"/>
    </isoform>
</comment>
<comment type="similarity">
    <text evidence="2">Belongs to the FAM228 family.</text>
</comment>
<comment type="sequence caution" evidence="2">
    <conflict type="frameshift">
        <sequence resource="EMBL-CDS" id="BAC34259"/>
    </conflict>
</comment>
<name>F228B_MOUSE</name>
<reference key="1">
    <citation type="journal article" date="2005" name="Science">
        <title>The transcriptional landscape of the mammalian genome.</title>
        <authorList>
            <person name="Carninci P."/>
            <person name="Kasukawa T."/>
            <person name="Katayama S."/>
            <person name="Gough J."/>
            <person name="Frith M.C."/>
            <person name="Maeda N."/>
            <person name="Oyama R."/>
            <person name="Ravasi T."/>
            <person name="Lenhard B."/>
            <person name="Wells C."/>
            <person name="Kodzius R."/>
            <person name="Shimokawa K."/>
            <person name="Bajic V.B."/>
            <person name="Brenner S.E."/>
            <person name="Batalov S."/>
            <person name="Forrest A.R."/>
            <person name="Zavolan M."/>
            <person name="Davis M.J."/>
            <person name="Wilming L.G."/>
            <person name="Aidinis V."/>
            <person name="Allen J.E."/>
            <person name="Ambesi-Impiombato A."/>
            <person name="Apweiler R."/>
            <person name="Aturaliya R.N."/>
            <person name="Bailey T.L."/>
            <person name="Bansal M."/>
            <person name="Baxter L."/>
            <person name="Beisel K.W."/>
            <person name="Bersano T."/>
            <person name="Bono H."/>
            <person name="Chalk A.M."/>
            <person name="Chiu K.P."/>
            <person name="Choudhary V."/>
            <person name="Christoffels A."/>
            <person name="Clutterbuck D.R."/>
            <person name="Crowe M.L."/>
            <person name="Dalla E."/>
            <person name="Dalrymple B.P."/>
            <person name="de Bono B."/>
            <person name="Della Gatta G."/>
            <person name="di Bernardo D."/>
            <person name="Down T."/>
            <person name="Engstrom P."/>
            <person name="Fagiolini M."/>
            <person name="Faulkner G."/>
            <person name="Fletcher C.F."/>
            <person name="Fukushima T."/>
            <person name="Furuno M."/>
            <person name="Futaki S."/>
            <person name="Gariboldi M."/>
            <person name="Georgii-Hemming P."/>
            <person name="Gingeras T.R."/>
            <person name="Gojobori T."/>
            <person name="Green R.E."/>
            <person name="Gustincich S."/>
            <person name="Harbers M."/>
            <person name="Hayashi Y."/>
            <person name="Hensch T.K."/>
            <person name="Hirokawa N."/>
            <person name="Hill D."/>
            <person name="Huminiecki L."/>
            <person name="Iacono M."/>
            <person name="Ikeo K."/>
            <person name="Iwama A."/>
            <person name="Ishikawa T."/>
            <person name="Jakt M."/>
            <person name="Kanapin A."/>
            <person name="Katoh M."/>
            <person name="Kawasawa Y."/>
            <person name="Kelso J."/>
            <person name="Kitamura H."/>
            <person name="Kitano H."/>
            <person name="Kollias G."/>
            <person name="Krishnan S.P."/>
            <person name="Kruger A."/>
            <person name="Kummerfeld S.K."/>
            <person name="Kurochkin I.V."/>
            <person name="Lareau L.F."/>
            <person name="Lazarevic D."/>
            <person name="Lipovich L."/>
            <person name="Liu J."/>
            <person name="Liuni S."/>
            <person name="McWilliam S."/>
            <person name="Madan Babu M."/>
            <person name="Madera M."/>
            <person name="Marchionni L."/>
            <person name="Matsuda H."/>
            <person name="Matsuzawa S."/>
            <person name="Miki H."/>
            <person name="Mignone F."/>
            <person name="Miyake S."/>
            <person name="Morris K."/>
            <person name="Mottagui-Tabar S."/>
            <person name="Mulder N."/>
            <person name="Nakano N."/>
            <person name="Nakauchi H."/>
            <person name="Ng P."/>
            <person name="Nilsson R."/>
            <person name="Nishiguchi S."/>
            <person name="Nishikawa S."/>
            <person name="Nori F."/>
            <person name="Ohara O."/>
            <person name="Okazaki Y."/>
            <person name="Orlando V."/>
            <person name="Pang K.C."/>
            <person name="Pavan W.J."/>
            <person name="Pavesi G."/>
            <person name="Pesole G."/>
            <person name="Petrovsky N."/>
            <person name="Piazza S."/>
            <person name="Reed J."/>
            <person name="Reid J.F."/>
            <person name="Ring B.Z."/>
            <person name="Ringwald M."/>
            <person name="Rost B."/>
            <person name="Ruan Y."/>
            <person name="Salzberg S.L."/>
            <person name="Sandelin A."/>
            <person name="Schneider C."/>
            <person name="Schoenbach C."/>
            <person name="Sekiguchi K."/>
            <person name="Semple C.A."/>
            <person name="Seno S."/>
            <person name="Sessa L."/>
            <person name="Sheng Y."/>
            <person name="Shibata Y."/>
            <person name="Shimada H."/>
            <person name="Shimada K."/>
            <person name="Silva D."/>
            <person name="Sinclair B."/>
            <person name="Sperling S."/>
            <person name="Stupka E."/>
            <person name="Sugiura K."/>
            <person name="Sultana R."/>
            <person name="Takenaka Y."/>
            <person name="Taki K."/>
            <person name="Tammoja K."/>
            <person name="Tan S.L."/>
            <person name="Tang S."/>
            <person name="Taylor M.S."/>
            <person name="Tegner J."/>
            <person name="Teichmann S.A."/>
            <person name="Ueda H.R."/>
            <person name="van Nimwegen E."/>
            <person name="Verardo R."/>
            <person name="Wei C.L."/>
            <person name="Yagi K."/>
            <person name="Yamanishi H."/>
            <person name="Zabarovsky E."/>
            <person name="Zhu S."/>
            <person name="Zimmer A."/>
            <person name="Hide W."/>
            <person name="Bult C."/>
            <person name="Grimmond S.M."/>
            <person name="Teasdale R.D."/>
            <person name="Liu E.T."/>
            <person name="Brusic V."/>
            <person name="Quackenbush J."/>
            <person name="Wahlestedt C."/>
            <person name="Mattick J.S."/>
            <person name="Hume D.A."/>
            <person name="Kai C."/>
            <person name="Sasaki D."/>
            <person name="Tomaru Y."/>
            <person name="Fukuda S."/>
            <person name="Kanamori-Katayama M."/>
            <person name="Suzuki M."/>
            <person name="Aoki J."/>
            <person name="Arakawa T."/>
            <person name="Iida J."/>
            <person name="Imamura K."/>
            <person name="Itoh M."/>
            <person name="Kato T."/>
            <person name="Kawaji H."/>
            <person name="Kawagashira N."/>
            <person name="Kawashima T."/>
            <person name="Kojima M."/>
            <person name="Kondo S."/>
            <person name="Konno H."/>
            <person name="Nakano K."/>
            <person name="Ninomiya N."/>
            <person name="Nishio T."/>
            <person name="Okada M."/>
            <person name="Plessy C."/>
            <person name="Shibata K."/>
            <person name="Shiraki T."/>
            <person name="Suzuki S."/>
            <person name="Tagami M."/>
            <person name="Waki K."/>
            <person name="Watahiki A."/>
            <person name="Okamura-Oho Y."/>
            <person name="Suzuki H."/>
            <person name="Kawai J."/>
            <person name="Hayashizaki Y."/>
        </authorList>
    </citation>
    <scope>NUCLEOTIDE SEQUENCE [LARGE SCALE MRNA] (ISOFORMS 1 AND 2)</scope>
    <source>
        <strain>C57BL/6J</strain>
        <tissue>Liver</tissue>
    </source>
</reference>
<reference key="2">
    <citation type="journal article" date="2004" name="Genome Res.">
        <title>The status, quality, and expansion of the NIH full-length cDNA project: the Mammalian Gene Collection (MGC).</title>
        <authorList>
            <consortium name="The MGC Project Team"/>
        </authorList>
    </citation>
    <scope>NUCLEOTIDE SEQUENCE [LARGE SCALE MRNA] (ISOFORM 1)</scope>
    <source>
        <tissue>Brain</tissue>
        <tissue>Testis</tissue>
    </source>
</reference>
<gene>
    <name type="primary">Fam228b</name>
</gene>
<feature type="chain" id="PRO_0000348450" description="Protein FAM228B">
    <location>
        <begin position="1"/>
        <end position="232"/>
    </location>
</feature>
<feature type="splice variant" id="VSP_035165" description="In isoform 2." evidence="1">
    <original>K</original>
    <variation>T</variation>
    <location>
        <position position="181"/>
    </location>
</feature>
<feature type="splice variant" id="VSP_035166" description="In isoform 2." evidence="1">
    <location>
        <begin position="182"/>
        <end position="232"/>
    </location>
</feature>
<keyword id="KW-0025">Alternative splicing</keyword>
<keyword id="KW-1185">Reference proteome</keyword>
<dbReference type="EMBL" id="AK044133">
    <property type="protein sequence ID" value="BAC31793.1"/>
    <property type="molecule type" value="mRNA"/>
</dbReference>
<dbReference type="EMBL" id="AK050447">
    <property type="protein sequence ID" value="BAC34259.1"/>
    <property type="status" value="ALT_FRAME"/>
    <property type="molecule type" value="mRNA"/>
</dbReference>
<dbReference type="EMBL" id="BC100429">
    <property type="protein sequence ID" value="AAI00430.1"/>
    <property type="molecule type" value="mRNA"/>
</dbReference>
<dbReference type="EMBL" id="BC145648">
    <property type="protein sequence ID" value="AAI45649.1"/>
    <property type="molecule type" value="mRNA"/>
</dbReference>
<dbReference type="CCDS" id="CCDS36400.1">
    <molecule id="Q497Q6-1"/>
</dbReference>
<dbReference type="RefSeq" id="NP_001369755.1">
    <molecule id="Q497Q6-1"/>
    <property type="nucleotide sequence ID" value="NM_001382826.1"/>
</dbReference>
<dbReference type="RefSeq" id="NP_780640.2">
    <molecule id="Q497Q6-1"/>
    <property type="nucleotide sequence ID" value="NM_175431.5"/>
</dbReference>
<dbReference type="RefSeq" id="XP_017170498.1">
    <property type="nucleotide sequence ID" value="XM_017315009.1"/>
</dbReference>
<dbReference type="SMR" id="Q497Q6"/>
<dbReference type="FunCoup" id="Q497Q6">
    <property type="interactions" value="20"/>
</dbReference>
<dbReference type="STRING" id="10090.ENSMUSP00000050881"/>
<dbReference type="iPTMnet" id="Q497Q6"/>
<dbReference type="PhosphoSitePlus" id="Q497Q6"/>
<dbReference type="PaxDb" id="10090-ENSMUSP00000050881"/>
<dbReference type="ProteomicsDB" id="271833">
    <molecule id="Q497Q6-1"/>
</dbReference>
<dbReference type="ProteomicsDB" id="271834">
    <molecule id="Q497Q6-2"/>
</dbReference>
<dbReference type="DNASU" id="207921"/>
<dbReference type="Ensembl" id="ENSMUST00000053458.7">
    <molecule id="Q497Q6-1"/>
    <property type="protein sequence ID" value="ENSMUSP00000050881.6"/>
    <property type="gene ID" value="ENSMUSG00000050545.11"/>
</dbReference>
<dbReference type="Ensembl" id="ENSMUST00000218575.2">
    <molecule id="Q497Q6-2"/>
    <property type="protein sequence ID" value="ENSMUSP00000151270.2"/>
    <property type="gene ID" value="ENSMUSG00000050545.11"/>
</dbReference>
<dbReference type="GeneID" id="207921"/>
<dbReference type="KEGG" id="mmu:207921"/>
<dbReference type="UCSC" id="uc007myd.2">
    <molecule id="Q497Q6-2"/>
    <property type="organism name" value="mouse"/>
</dbReference>
<dbReference type="UCSC" id="uc007mye.2">
    <molecule id="Q497Q6-1"/>
    <property type="organism name" value="mouse"/>
</dbReference>
<dbReference type="AGR" id="MGI:2442121"/>
<dbReference type="CTD" id="375190"/>
<dbReference type="MGI" id="MGI:2442121">
    <property type="gene designation" value="Fam228b"/>
</dbReference>
<dbReference type="VEuPathDB" id="HostDB:ENSMUSG00000050545"/>
<dbReference type="eggNOG" id="ENOG502S14E">
    <property type="taxonomic scope" value="Eukaryota"/>
</dbReference>
<dbReference type="GeneTree" id="ENSGT00530000064185"/>
<dbReference type="HOGENOM" id="CLU_067936_1_0_1"/>
<dbReference type="InParanoid" id="Q497Q6"/>
<dbReference type="OMA" id="KVCSYKK"/>
<dbReference type="OrthoDB" id="9905773at2759"/>
<dbReference type="PhylomeDB" id="Q497Q6"/>
<dbReference type="TreeFam" id="TF336288"/>
<dbReference type="BioGRID-ORCS" id="207921">
    <property type="hits" value="2 hits in 77 CRISPR screens"/>
</dbReference>
<dbReference type="ChiTaRS" id="Fam228b">
    <property type="organism name" value="mouse"/>
</dbReference>
<dbReference type="PRO" id="PR:Q497Q6"/>
<dbReference type="Proteomes" id="UP000000589">
    <property type="component" value="Chromosome 12"/>
</dbReference>
<dbReference type="RNAct" id="Q497Q6">
    <property type="molecule type" value="protein"/>
</dbReference>
<dbReference type="Bgee" id="ENSMUSG00000050545">
    <property type="expression patterns" value="Expressed in spermatid and 194 other cell types or tissues"/>
</dbReference>
<dbReference type="ExpressionAtlas" id="Q497Q6">
    <property type="expression patterns" value="baseline and differential"/>
</dbReference>
<dbReference type="InterPro" id="IPR040046">
    <property type="entry name" value="FAM228"/>
</dbReference>
<dbReference type="PANTHER" id="PTHR28584">
    <property type="entry name" value="FAMILY WITH SEQUENCE SIMILARITY 228 MEMBER A"/>
    <property type="match status" value="1"/>
</dbReference>
<dbReference type="PANTHER" id="PTHR28584:SF3">
    <property type="entry name" value="PROTEIN FAM228B"/>
    <property type="match status" value="1"/>
</dbReference>
<sequence length="232" mass="27823">MTTMKNRSQDDMVTGTLPKLKSSKEWLEPQSLSFMEALAKEDTDAAVQSILYRENYIMKELDKYLHHQDFLNTRRKEMLYKKWVERVADPLQKKIIEKVHSHKNIKKRRRQELDNFLKHSNKKGNAFIEHYDPKEYDPFYMSKEDPNFLKVIMPPFRDPLKKAQYDQDDEKRTLLQCETGKIYTMKEFKEIEKAQLHSRFPSISNSRQSMTPNGWLKVPMSYIESEFCKKSR</sequence>
<protein>
    <recommendedName>
        <fullName>Protein FAM228B</fullName>
    </recommendedName>
</protein>
<accession>Q497Q6</accession>
<accession>Q8BLM3</accession>
<accession>Q8BWN5</accession>
<evidence type="ECO:0000303" key="1">
    <source>
    </source>
</evidence>
<evidence type="ECO:0000305" key="2"/>